<name>PTCD3_PONAB</name>
<keyword id="KW-0007">Acetylation</keyword>
<keyword id="KW-0496">Mitochondrion</keyword>
<keyword id="KW-1185">Reference proteome</keyword>
<keyword id="KW-0677">Repeat</keyword>
<keyword id="KW-0687">Ribonucleoprotein</keyword>
<keyword id="KW-0689">Ribosomal protein</keyword>
<keyword id="KW-0694">RNA-binding</keyword>
<keyword id="KW-0699">rRNA-binding</keyword>
<keyword id="KW-0809">Transit peptide</keyword>
<keyword id="KW-0810">Translation regulation</keyword>
<feature type="transit peptide" description="Mitochondrion" evidence="3">
    <location>
        <begin position="1"/>
        <end position="37"/>
    </location>
</feature>
<feature type="chain" id="PRO_0000305030" description="Small ribosomal subunit protein mS39">
    <location>
        <begin position="38"/>
        <end position="689"/>
    </location>
</feature>
<feature type="repeat" description="PPR 1">
    <location>
        <begin position="149"/>
        <end position="183"/>
    </location>
</feature>
<feature type="repeat" description="PPR 2">
    <location>
        <begin position="184"/>
        <end position="219"/>
    </location>
</feature>
<feature type="repeat" description="PPR 3">
    <location>
        <begin position="255"/>
        <end position="289"/>
    </location>
</feature>
<feature type="repeat" description="PPR 4">
    <location>
        <begin position="290"/>
        <end position="330"/>
    </location>
</feature>
<feature type="repeat" description="PPR 5">
    <location>
        <begin position="331"/>
        <end position="367"/>
    </location>
</feature>
<feature type="repeat" description="PPR 6">
    <location>
        <begin position="368"/>
        <end position="404"/>
    </location>
</feature>
<feature type="repeat" description="PPR 7">
    <location>
        <begin position="412"/>
        <end position="446"/>
    </location>
</feature>
<feature type="repeat" description="PPR 8">
    <location>
        <begin position="454"/>
        <end position="488"/>
    </location>
</feature>
<feature type="repeat" description="PPR 9">
    <location>
        <begin position="489"/>
        <end position="523"/>
    </location>
</feature>
<feature type="repeat" description="PPR 10">
    <location>
        <begin position="572"/>
        <end position="606"/>
    </location>
</feature>
<feature type="region of interest" description="Disordered" evidence="4">
    <location>
        <begin position="665"/>
        <end position="689"/>
    </location>
</feature>
<feature type="compositionally biased region" description="Acidic residues" evidence="4">
    <location>
        <begin position="673"/>
        <end position="689"/>
    </location>
</feature>
<feature type="modified residue" description="N6-acetyllysine" evidence="2">
    <location>
        <position position="126"/>
    </location>
</feature>
<protein>
    <recommendedName>
        <fullName evidence="5">Small ribosomal subunit protein mS39</fullName>
    </recommendedName>
    <alternativeName>
        <fullName>28S ribosomal protein S39, mitochondrial</fullName>
        <shortName>MRP-S39</shortName>
    </alternativeName>
    <alternativeName>
        <fullName>Pentatricopeptide repeat domain-containing protein 3, mitochondrial</fullName>
    </alternativeName>
</protein>
<proteinExistence type="evidence at transcript level"/>
<comment type="function">
    <text evidence="1">Mitochondrial RNA-binding protein that has a role in mitochondrial translation.</text>
</comment>
<comment type="subunit">
    <text evidence="1">Component of the mitochondrial ribosome small subunit (28S) which comprises a 12S rRNA and about 30 distinct proteins. Associated with the 12S mitochondrial rRNA (12S mt-rRNA) (By similarity).</text>
</comment>
<comment type="subcellular location">
    <subcellularLocation>
        <location evidence="1">Mitochondrion</location>
    </subcellularLocation>
</comment>
<comment type="similarity">
    <text evidence="5">Belongs to the mitochondrion-specific ribosomal protein mS39 family.</text>
</comment>
<sequence length="689" mass="78604">MAGVSAVRWLGLRSRLGQPLTGRRAGLCKQARSCRFYSGSATLSKVEGTDITGIEEVVIPKKKTWDKVAVLQALASTVNRDTTSVPYVFQDDPYLIPASSLESRLFLLAKKSGENVAKFIINSYPKYFQKDIAEPHIPCLMPEYFEPQIKDISEAALKERIELRKVKASVDMFDQLLQAGTTVSLETTNSLLDLLCYFGDQEPSTDYHFQQTEQSEALEVENDETSRRKAGHQFGVTWQAKNNAERIFSLMPEKNAHSYCTMIRGMVKHRAYEQALNLYTELLNNRLHADVYTFNALTEATVCVINGKFEEKWSKIQELLRHMVAQKVKPNLQTFNTILKCLRRFHVFARSPALRILREMKAIGIEPSLATYHHIIHVFDQPGDPLKRSSFIIYDIMNELMGKRFSPKDPDDDKFFQSAMSICSSLRDLELAYQVHGLLNTGDNWKFIGPDHHRNFYYSKFFDLICLMEQIDVTLKWYEDLIPSVYFPHSQTLIHLLQALDVANRLEMIPKIWKDSKEYGHTFRSDLREEILKLMARDKHPPELQVAFADCAADIKSAYESQHIRQTAQDWPATSLYCIAILFLRAGRTQEAWNMLELFRKHNKIPRSELLNELMDSAKVSNSPSQAIEVVELASAFSLPICEGLTQRVMSDFAINQEQKEALGNLTALTSDSDTDSSSDSDSDTSEGK</sequence>
<organism>
    <name type="scientific">Pongo abelii</name>
    <name type="common">Sumatran orangutan</name>
    <name type="synonym">Pongo pygmaeus abelii</name>
    <dbReference type="NCBI Taxonomy" id="9601"/>
    <lineage>
        <taxon>Eukaryota</taxon>
        <taxon>Metazoa</taxon>
        <taxon>Chordata</taxon>
        <taxon>Craniata</taxon>
        <taxon>Vertebrata</taxon>
        <taxon>Euteleostomi</taxon>
        <taxon>Mammalia</taxon>
        <taxon>Eutheria</taxon>
        <taxon>Euarchontoglires</taxon>
        <taxon>Primates</taxon>
        <taxon>Haplorrhini</taxon>
        <taxon>Catarrhini</taxon>
        <taxon>Hominidae</taxon>
        <taxon>Pongo</taxon>
    </lineage>
</organism>
<gene>
    <name type="primary">PTCD3</name>
    <name type="synonym">MRPS39</name>
</gene>
<evidence type="ECO:0000250" key="1"/>
<evidence type="ECO:0000250" key="2">
    <source>
        <dbReference type="UniProtKB" id="Q96EY7"/>
    </source>
</evidence>
<evidence type="ECO:0000255" key="3"/>
<evidence type="ECO:0000256" key="4">
    <source>
        <dbReference type="SAM" id="MobiDB-lite"/>
    </source>
</evidence>
<evidence type="ECO:0000305" key="5"/>
<accession>Q5R8W8</accession>
<reference key="1">
    <citation type="submission" date="2004-11" db="EMBL/GenBank/DDBJ databases">
        <authorList>
            <consortium name="The German cDNA consortium"/>
        </authorList>
    </citation>
    <scope>NUCLEOTIDE SEQUENCE [LARGE SCALE MRNA]</scope>
    <source>
        <tissue>Brain cortex</tissue>
    </source>
</reference>
<dbReference type="EMBL" id="CR859630">
    <property type="protein sequence ID" value="CAH91792.1"/>
    <property type="molecule type" value="mRNA"/>
</dbReference>
<dbReference type="RefSeq" id="NP_001126041.1">
    <property type="nucleotide sequence ID" value="NM_001132569.2"/>
</dbReference>
<dbReference type="SMR" id="Q5R8W8"/>
<dbReference type="FunCoup" id="Q5R8W8">
    <property type="interactions" value="3569"/>
</dbReference>
<dbReference type="STRING" id="9601.ENSPPYP00000013622"/>
<dbReference type="GeneID" id="100172990"/>
<dbReference type="KEGG" id="pon:100172990"/>
<dbReference type="CTD" id="55037"/>
<dbReference type="eggNOG" id="KOG4422">
    <property type="taxonomic scope" value="Eukaryota"/>
</dbReference>
<dbReference type="InParanoid" id="Q5R8W8"/>
<dbReference type="OrthoDB" id="185373at2759"/>
<dbReference type="Proteomes" id="UP000001595">
    <property type="component" value="Unplaced"/>
</dbReference>
<dbReference type="GO" id="GO:0005739">
    <property type="term" value="C:mitochondrion"/>
    <property type="evidence" value="ECO:0000250"/>
    <property type="project" value="UniProtKB"/>
</dbReference>
<dbReference type="GO" id="GO:1990904">
    <property type="term" value="C:ribonucleoprotein complex"/>
    <property type="evidence" value="ECO:0007669"/>
    <property type="project" value="UniProtKB-KW"/>
</dbReference>
<dbReference type="GO" id="GO:0005840">
    <property type="term" value="C:ribosome"/>
    <property type="evidence" value="ECO:0007669"/>
    <property type="project" value="UniProtKB-KW"/>
</dbReference>
<dbReference type="GO" id="GO:0043024">
    <property type="term" value="F:ribosomal small subunit binding"/>
    <property type="evidence" value="ECO:0000250"/>
    <property type="project" value="UniProtKB"/>
</dbReference>
<dbReference type="GO" id="GO:0019843">
    <property type="term" value="F:rRNA binding"/>
    <property type="evidence" value="ECO:0000250"/>
    <property type="project" value="UniProtKB"/>
</dbReference>
<dbReference type="GO" id="GO:0032543">
    <property type="term" value="P:mitochondrial translation"/>
    <property type="evidence" value="ECO:0000250"/>
    <property type="project" value="UniProtKB"/>
</dbReference>
<dbReference type="GO" id="GO:0006417">
    <property type="term" value="P:regulation of translation"/>
    <property type="evidence" value="ECO:0007669"/>
    <property type="project" value="UniProtKB-KW"/>
</dbReference>
<dbReference type="FunFam" id="1.25.40.10:FF:000420">
    <property type="entry name" value="Pentatricopeptide repeat domain-containing protein 3, mitochondrial"/>
    <property type="match status" value="1"/>
</dbReference>
<dbReference type="FunFam" id="1.25.40.10:FF:000457">
    <property type="entry name" value="Pentatricopeptide repeat domain-containing protein 3, mitochondrial"/>
    <property type="match status" value="1"/>
</dbReference>
<dbReference type="Gene3D" id="1.25.40.10">
    <property type="entry name" value="Tetratricopeptide repeat domain"/>
    <property type="match status" value="2"/>
</dbReference>
<dbReference type="InterPro" id="IPR002885">
    <property type="entry name" value="Pentatricopeptide_rpt"/>
</dbReference>
<dbReference type="InterPro" id="IPR037387">
    <property type="entry name" value="PTCD3"/>
</dbReference>
<dbReference type="InterPro" id="IPR055063">
    <property type="entry name" value="Rib_mS39_PPR"/>
</dbReference>
<dbReference type="InterPro" id="IPR011990">
    <property type="entry name" value="TPR-like_helical_dom_sf"/>
</dbReference>
<dbReference type="PANTHER" id="PTHR16276">
    <property type="entry name" value="PENTATRICOPEPTIDE REPEAT DOMAIN-CONTAINING PROTEIN 3"/>
    <property type="match status" value="1"/>
</dbReference>
<dbReference type="PANTHER" id="PTHR16276:SF1">
    <property type="entry name" value="SMALL RIBOSOMAL SUBUNIT PROTEIN MS39"/>
    <property type="match status" value="1"/>
</dbReference>
<dbReference type="Pfam" id="PF13812">
    <property type="entry name" value="PPR_3"/>
    <property type="match status" value="2"/>
</dbReference>
<dbReference type="Pfam" id="PF22330">
    <property type="entry name" value="Rib_mS39_PPR"/>
    <property type="match status" value="1"/>
</dbReference>
<dbReference type="PROSITE" id="PS51375">
    <property type="entry name" value="PPR"/>
    <property type="match status" value="4"/>
</dbReference>